<accession>Q8P7K6</accession>
<protein>
    <recommendedName>
        <fullName evidence="1">Dual-action ribosomal maturation protein DarP</fullName>
    </recommendedName>
    <alternativeName>
        <fullName evidence="1">Large ribosomal subunit assembly factor DarP</fullName>
    </alternativeName>
</protein>
<sequence length="193" mass="22002">MRGRDEDTGEFRGASRSQQRREALEIFDLGEKLVALTPAQLAKLPVPESLIPHIEESKRITSHIAHKRQLAFLAKHMRREDDETLDAIRDALDANSDTARREVAAIHRVERWRERLLAEGDVALAELLEAYPAADRQQLRQLVRNAIHERAKNKPPRAYRELFQVLRDLSQKPGLESGDAGLEDEESASENDE</sequence>
<feature type="chain" id="PRO_0000208236" description="Dual-action ribosomal maturation protein DarP">
    <location>
        <begin position="1"/>
        <end position="193"/>
    </location>
</feature>
<feature type="region of interest" description="Disordered" evidence="2">
    <location>
        <begin position="1"/>
        <end position="20"/>
    </location>
</feature>
<feature type="region of interest" description="Disordered" evidence="2">
    <location>
        <begin position="170"/>
        <end position="193"/>
    </location>
</feature>
<feature type="compositionally biased region" description="Basic and acidic residues" evidence="2">
    <location>
        <begin position="1"/>
        <end position="10"/>
    </location>
</feature>
<feature type="compositionally biased region" description="Acidic residues" evidence="2">
    <location>
        <begin position="181"/>
        <end position="193"/>
    </location>
</feature>
<proteinExistence type="inferred from homology"/>
<reference key="1">
    <citation type="journal article" date="2002" name="Nature">
        <title>Comparison of the genomes of two Xanthomonas pathogens with differing host specificities.</title>
        <authorList>
            <person name="da Silva A.C.R."/>
            <person name="Ferro J.A."/>
            <person name="Reinach F.C."/>
            <person name="Farah C.S."/>
            <person name="Furlan L.R."/>
            <person name="Quaggio R.B."/>
            <person name="Monteiro-Vitorello C.B."/>
            <person name="Van Sluys M.A."/>
            <person name="Almeida N.F. Jr."/>
            <person name="Alves L.M.C."/>
            <person name="do Amaral A.M."/>
            <person name="Bertolini M.C."/>
            <person name="Camargo L.E.A."/>
            <person name="Camarotte G."/>
            <person name="Cannavan F."/>
            <person name="Cardozo J."/>
            <person name="Chambergo F."/>
            <person name="Ciapina L.P."/>
            <person name="Cicarelli R.M.B."/>
            <person name="Coutinho L.L."/>
            <person name="Cursino-Santos J.R."/>
            <person name="El-Dorry H."/>
            <person name="Faria J.B."/>
            <person name="Ferreira A.J.S."/>
            <person name="Ferreira R.C.C."/>
            <person name="Ferro M.I.T."/>
            <person name="Formighieri E.F."/>
            <person name="Franco M.C."/>
            <person name="Greggio C.C."/>
            <person name="Gruber A."/>
            <person name="Katsuyama A.M."/>
            <person name="Kishi L.T."/>
            <person name="Leite R.P."/>
            <person name="Lemos E.G.M."/>
            <person name="Lemos M.V.F."/>
            <person name="Locali E.C."/>
            <person name="Machado M.A."/>
            <person name="Madeira A.M.B.N."/>
            <person name="Martinez-Rossi N.M."/>
            <person name="Martins E.C."/>
            <person name="Meidanis J."/>
            <person name="Menck C.F.M."/>
            <person name="Miyaki C.Y."/>
            <person name="Moon D.H."/>
            <person name="Moreira L.M."/>
            <person name="Novo M.T.M."/>
            <person name="Okura V.K."/>
            <person name="Oliveira M.C."/>
            <person name="Oliveira V.R."/>
            <person name="Pereira H.A."/>
            <person name="Rossi A."/>
            <person name="Sena J.A.D."/>
            <person name="Silva C."/>
            <person name="de Souza R.F."/>
            <person name="Spinola L.A.F."/>
            <person name="Takita M.A."/>
            <person name="Tamura R.E."/>
            <person name="Teixeira E.C."/>
            <person name="Tezza R.I.D."/>
            <person name="Trindade dos Santos M."/>
            <person name="Truffi D."/>
            <person name="Tsai S.M."/>
            <person name="White F.F."/>
            <person name="Setubal J.C."/>
            <person name="Kitajima J.P."/>
        </authorList>
    </citation>
    <scope>NUCLEOTIDE SEQUENCE [LARGE SCALE GENOMIC DNA]</scope>
    <source>
        <strain>ATCC 33913 / DSM 3586 / NCPPB 528 / LMG 568 / P 25</strain>
    </source>
</reference>
<comment type="function">
    <text evidence="1">Member of a network of 50S ribosomal subunit biogenesis factors which assembles along the 30S-50S interface, preventing incorrect 23S rRNA structures from forming. Promotes peptidyl transferase center (PTC) maturation.</text>
</comment>
<comment type="subcellular location">
    <subcellularLocation>
        <location evidence="1">Cytoplasm</location>
    </subcellularLocation>
    <text evidence="1">Associates with late stage pre-50S ribosomal subunits.</text>
</comment>
<comment type="similarity">
    <text evidence="1">Belongs to the DarP family.</text>
</comment>
<name>DARP_XANCP</name>
<organism>
    <name type="scientific">Xanthomonas campestris pv. campestris (strain ATCC 33913 / DSM 3586 / NCPPB 528 / LMG 568 / P 25)</name>
    <dbReference type="NCBI Taxonomy" id="190485"/>
    <lineage>
        <taxon>Bacteria</taxon>
        <taxon>Pseudomonadati</taxon>
        <taxon>Pseudomonadota</taxon>
        <taxon>Gammaproteobacteria</taxon>
        <taxon>Lysobacterales</taxon>
        <taxon>Lysobacteraceae</taxon>
        <taxon>Xanthomonas</taxon>
    </lineage>
</organism>
<evidence type="ECO:0000255" key="1">
    <source>
        <dbReference type="HAMAP-Rule" id="MF_00765"/>
    </source>
</evidence>
<evidence type="ECO:0000256" key="2">
    <source>
        <dbReference type="SAM" id="MobiDB-lite"/>
    </source>
</evidence>
<gene>
    <name evidence="1" type="primary">darP</name>
    <name type="ordered locus">XCC2605</name>
</gene>
<dbReference type="EMBL" id="AE008922">
    <property type="protein sequence ID" value="AAM41877.1"/>
    <property type="molecule type" value="Genomic_DNA"/>
</dbReference>
<dbReference type="RefSeq" id="NP_637953.1">
    <property type="nucleotide sequence ID" value="NC_003902.1"/>
</dbReference>
<dbReference type="SMR" id="Q8P7K6"/>
<dbReference type="STRING" id="190485.XCC2605"/>
<dbReference type="EnsemblBacteria" id="AAM41877">
    <property type="protein sequence ID" value="AAM41877"/>
    <property type="gene ID" value="XCC2605"/>
</dbReference>
<dbReference type="KEGG" id="xcc:XCC2605"/>
<dbReference type="PATRIC" id="fig|190485.4.peg.2774"/>
<dbReference type="eggNOG" id="COG3028">
    <property type="taxonomic scope" value="Bacteria"/>
</dbReference>
<dbReference type="HOGENOM" id="CLU_106757_0_0_6"/>
<dbReference type="OrthoDB" id="5293604at2"/>
<dbReference type="Proteomes" id="UP000001010">
    <property type="component" value="Chromosome"/>
</dbReference>
<dbReference type="GO" id="GO:0005829">
    <property type="term" value="C:cytosol"/>
    <property type="evidence" value="ECO:0000318"/>
    <property type="project" value="GO_Central"/>
</dbReference>
<dbReference type="GO" id="GO:0043022">
    <property type="term" value="F:ribosome binding"/>
    <property type="evidence" value="ECO:0007669"/>
    <property type="project" value="UniProtKB-UniRule"/>
</dbReference>
<dbReference type="GO" id="GO:0019843">
    <property type="term" value="F:rRNA binding"/>
    <property type="evidence" value="ECO:0007669"/>
    <property type="project" value="UniProtKB-UniRule"/>
</dbReference>
<dbReference type="GO" id="GO:1902626">
    <property type="term" value="P:assembly of large subunit precursor of preribosome"/>
    <property type="evidence" value="ECO:0007669"/>
    <property type="project" value="UniProtKB-UniRule"/>
</dbReference>
<dbReference type="CDD" id="cd16331">
    <property type="entry name" value="YjgA-like"/>
    <property type="match status" value="1"/>
</dbReference>
<dbReference type="FunFam" id="1.10.60.30:FF:000002">
    <property type="entry name" value="UPF0307 protein YjgA"/>
    <property type="match status" value="1"/>
</dbReference>
<dbReference type="Gene3D" id="1.10.60.30">
    <property type="entry name" value="PSPTO4464-like domains"/>
    <property type="match status" value="2"/>
</dbReference>
<dbReference type="HAMAP" id="MF_00765">
    <property type="entry name" value="DarP"/>
    <property type="match status" value="1"/>
</dbReference>
<dbReference type="InterPro" id="IPR006839">
    <property type="entry name" value="DarP"/>
</dbReference>
<dbReference type="InterPro" id="IPR023153">
    <property type="entry name" value="DarP_sf"/>
</dbReference>
<dbReference type="NCBIfam" id="NF003593">
    <property type="entry name" value="PRK05255.1-1"/>
    <property type="match status" value="1"/>
</dbReference>
<dbReference type="PANTHER" id="PTHR38101">
    <property type="entry name" value="UPF0307 PROTEIN YJGA"/>
    <property type="match status" value="1"/>
</dbReference>
<dbReference type="PANTHER" id="PTHR38101:SF1">
    <property type="entry name" value="UPF0307 PROTEIN YJGA"/>
    <property type="match status" value="1"/>
</dbReference>
<dbReference type="Pfam" id="PF04751">
    <property type="entry name" value="DarP"/>
    <property type="match status" value="1"/>
</dbReference>
<dbReference type="PIRSF" id="PIRSF016183">
    <property type="entry name" value="UCP016183"/>
    <property type="match status" value="1"/>
</dbReference>
<dbReference type="SUPFAM" id="SSF158710">
    <property type="entry name" value="PSPTO4464-like"/>
    <property type="match status" value="1"/>
</dbReference>
<keyword id="KW-0963">Cytoplasm</keyword>
<keyword id="KW-1185">Reference proteome</keyword>
<keyword id="KW-0690">Ribosome biogenesis</keyword>
<keyword id="KW-0694">RNA-binding</keyword>
<keyword id="KW-0699">rRNA-binding</keyword>